<name>CI129_HUMAN</name>
<evidence type="ECO:0000256" key="1">
    <source>
        <dbReference type="SAM" id="MobiDB-lite"/>
    </source>
</evidence>
<evidence type="ECO:0000305" key="2"/>
<evidence type="ECO:0000312" key="3">
    <source>
        <dbReference type="HGNC" id="HGNC:31116"/>
    </source>
</evidence>
<reference key="1">
    <citation type="journal article" date="2004" name="Nature">
        <title>DNA sequence and analysis of human chromosome 9.</title>
        <authorList>
            <person name="Humphray S.J."/>
            <person name="Oliver K."/>
            <person name="Hunt A.R."/>
            <person name="Plumb R.W."/>
            <person name="Loveland J.E."/>
            <person name="Howe K.L."/>
            <person name="Andrews T.D."/>
            <person name="Searle S."/>
            <person name="Hunt S.E."/>
            <person name="Scott C.E."/>
            <person name="Jones M.C."/>
            <person name="Ainscough R."/>
            <person name="Almeida J.P."/>
            <person name="Ambrose K.D."/>
            <person name="Ashwell R.I.S."/>
            <person name="Babbage A.K."/>
            <person name="Babbage S."/>
            <person name="Bagguley C.L."/>
            <person name="Bailey J."/>
            <person name="Banerjee R."/>
            <person name="Barker D.J."/>
            <person name="Barlow K.F."/>
            <person name="Bates K."/>
            <person name="Beasley H."/>
            <person name="Beasley O."/>
            <person name="Bird C.P."/>
            <person name="Bray-Allen S."/>
            <person name="Brown A.J."/>
            <person name="Brown J.Y."/>
            <person name="Burford D."/>
            <person name="Burrill W."/>
            <person name="Burton J."/>
            <person name="Carder C."/>
            <person name="Carter N.P."/>
            <person name="Chapman J.C."/>
            <person name="Chen Y."/>
            <person name="Clarke G."/>
            <person name="Clark S.Y."/>
            <person name="Clee C.M."/>
            <person name="Clegg S."/>
            <person name="Collier R.E."/>
            <person name="Corby N."/>
            <person name="Crosier M."/>
            <person name="Cummings A.T."/>
            <person name="Davies J."/>
            <person name="Dhami P."/>
            <person name="Dunn M."/>
            <person name="Dutta I."/>
            <person name="Dyer L.W."/>
            <person name="Earthrowl M.E."/>
            <person name="Faulkner L."/>
            <person name="Fleming C.J."/>
            <person name="Frankish A."/>
            <person name="Frankland J.A."/>
            <person name="French L."/>
            <person name="Fricker D.G."/>
            <person name="Garner P."/>
            <person name="Garnett J."/>
            <person name="Ghori J."/>
            <person name="Gilbert J.G.R."/>
            <person name="Glison C."/>
            <person name="Grafham D.V."/>
            <person name="Gribble S."/>
            <person name="Griffiths C."/>
            <person name="Griffiths-Jones S."/>
            <person name="Grocock R."/>
            <person name="Guy J."/>
            <person name="Hall R.E."/>
            <person name="Hammond S."/>
            <person name="Harley J.L."/>
            <person name="Harrison E.S.I."/>
            <person name="Hart E.A."/>
            <person name="Heath P.D."/>
            <person name="Henderson C.D."/>
            <person name="Hopkins B.L."/>
            <person name="Howard P.J."/>
            <person name="Howden P.J."/>
            <person name="Huckle E."/>
            <person name="Johnson C."/>
            <person name="Johnson D."/>
            <person name="Joy A.A."/>
            <person name="Kay M."/>
            <person name="Keenan S."/>
            <person name="Kershaw J.K."/>
            <person name="Kimberley A.M."/>
            <person name="King A."/>
            <person name="Knights A."/>
            <person name="Laird G.K."/>
            <person name="Langford C."/>
            <person name="Lawlor S."/>
            <person name="Leongamornlert D.A."/>
            <person name="Leversha M."/>
            <person name="Lloyd C."/>
            <person name="Lloyd D.M."/>
            <person name="Lovell J."/>
            <person name="Martin S."/>
            <person name="Mashreghi-Mohammadi M."/>
            <person name="Matthews L."/>
            <person name="McLaren S."/>
            <person name="McLay K.E."/>
            <person name="McMurray A."/>
            <person name="Milne S."/>
            <person name="Nickerson T."/>
            <person name="Nisbett J."/>
            <person name="Nordsiek G."/>
            <person name="Pearce A.V."/>
            <person name="Peck A.I."/>
            <person name="Porter K.M."/>
            <person name="Pandian R."/>
            <person name="Pelan S."/>
            <person name="Phillimore B."/>
            <person name="Povey S."/>
            <person name="Ramsey Y."/>
            <person name="Rand V."/>
            <person name="Scharfe M."/>
            <person name="Sehra H.K."/>
            <person name="Shownkeen R."/>
            <person name="Sims S.K."/>
            <person name="Skuce C.D."/>
            <person name="Smith M."/>
            <person name="Steward C.A."/>
            <person name="Swarbreck D."/>
            <person name="Sycamore N."/>
            <person name="Tester J."/>
            <person name="Thorpe A."/>
            <person name="Tracey A."/>
            <person name="Tromans A."/>
            <person name="Thomas D.W."/>
            <person name="Wall M."/>
            <person name="Wallis J.M."/>
            <person name="West A.P."/>
            <person name="Whitehead S.L."/>
            <person name="Willey D.L."/>
            <person name="Williams S.A."/>
            <person name="Wilming L."/>
            <person name="Wray P.W."/>
            <person name="Young L."/>
            <person name="Ashurst J.L."/>
            <person name="Coulson A."/>
            <person name="Blocker H."/>
            <person name="Durbin R.M."/>
            <person name="Sulston J.E."/>
            <person name="Hubbard T."/>
            <person name="Jackson M.J."/>
            <person name="Bentley D.R."/>
            <person name="Beck S."/>
            <person name="Rogers J."/>
            <person name="Dunham I."/>
        </authorList>
    </citation>
    <scope>NUCLEOTIDE SEQUENCE [LARGE SCALE GENOMIC DNA]</scope>
</reference>
<keyword id="KW-1185">Reference proteome</keyword>
<organism>
    <name type="scientific">Homo sapiens</name>
    <name type="common">Human</name>
    <dbReference type="NCBI Taxonomy" id="9606"/>
    <lineage>
        <taxon>Eukaryota</taxon>
        <taxon>Metazoa</taxon>
        <taxon>Chordata</taxon>
        <taxon>Craniata</taxon>
        <taxon>Vertebrata</taxon>
        <taxon>Euteleostomi</taxon>
        <taxon>Mammalia</taxon>
        <taxon>Eutheria</taxon>
        <taxon>Euarchontoglires</taxon>
        <taxon>Primates</taxon>
        <taxon>Haplorrhini</taxon>
        <taxon>Catarrhini</taxon>
        <taxon>Hominidae</taxon>
        <taxon>Homo</taxon>
    </lineage>
</organism>
<accession>Q5T035</accession>
<protein>
    <recommendedName>
        <fullName evidence="2">Putative uncharacterized protein FAM120A2P</fullName>
    </recommendedName>
    <alternativeName>
        <fullName evidence="3">FAM120A2P pseudogene</fullName>
    </alternativeName>
</protein>
<dbReference type="EMBL" id="AL583839">
    <property type="status" value="NOT_ANNOTATED_CDS"/>
    <property type="molecule type" value="Genomic_DNA"/>
</dbReference>
<dbReference type="RefSeq" id="NP_001092278.1">
    <property type="nucleotide sequence ID" value="NM_001098808.1"/>
</dbReference>
<dbReference type="RefSeq" id="XP_006717180.1">
    <property type="nucleotide sequence ID" value="XM_006717117.3"/>
</dbReference>
<dbReference type="BioGRID" id="138654">
    <property type="interactions" value="2"/>
</dbReference>
<dbReference type="STRING" id="9606.ENSP00000364568"/>
<dbReference type="iPTMnet" id="Q5T035"/>
<dbReference type="PhosphoSitePlus" id="Q5T035"/>
<dbReference type="SwissPalm" id="Q5T035"/>
<dbReference type="BioMuta" id="C9orf129"/>
<dbReference type="jPOST" id="Q5T035"/>
<dbReference type="MassIVE" id="Q5T035"/>
<dbReference type="PaxDb" id="9606-ENSP00000364568"/>
<dbReference type="PeptideAtlas" id="Q5T035"/>
<dbReference type="ProteomicsDB" id="64122"/>
<dbReference type="DNASU" id="445577"/>
<dbReference type="UCSC" id="uc010mre.3">
    <property type="organism name" value="human"/>
</dbReference>
<dbReference type="AGR" id="HGNC:31116"/>
<dbReference type="GeneCards" id="FAM120A2P"/>
<dbReference type="HGNC" id="HGNC:31116">
    <property type="gene designation" value="FAM120A2P"/>
</dbReference>
<dbReference type="neXtProt" id="NX_Q5T035"/>
<dbReference type="PharmGKB" id="PA134884589"/>
<dbReference type="eggNOG" id="ENOG502QQNQ">
    <property type="taxonomic scope" value="Eukaryota"/>
</dbReference>
<dbReference type="HOGENOM" id="CLU_1389802_0_0_1"/>
<dbReference type="InParanoid" id="Q5T035"/>
<dbReference type="PAN-GO" id="Q5T035">
    <property type="GO annotations" value="1 GO annotation based on evolutionary models"/>
</dbReference>
<dbReference type="PhylomeDB" id="Q5T035"/>
<dbReference type="PathwayCommons" id="Q5T035"/>
<dbReference type="SignaLink" id="Q5T035"/>
<dbReference type="BioGRID-ORCS" id="445577">
    <property type="hits" value="66 hits in 1123 CRISPR screens"/>
</dbReference>
<dbReference type="ChiTaRS" id="C9orf129">
    <property type="organism name" value="human"/>
</dbReference>
<dbReference type="GenomeRNAi" id="445577"/>
<dbReference type="Pharos" id="Q5T035">
    <property type="development level" value="Tdark"/>
</dbReference>
<dbReference type="PRO" id="PR:Q5T035"/>
<dbReference type="Proteomes" id="UP000005640">
    <property type="component" value="Chromosome 9"/>
</dbReference>
<dbReference type="RNAct" id="Q5T035">
    <property type="molecule type" value="protein"/>
</dbReference>
<sequence length="196" mass="20715">MPGMVPPHVPPQMLNIPQTSLQAKPVAPQVPSPGGAPGQGPYPYSLSEPAPLTLDTSGKNLTEQNSYSNIPHEGKHTPLYERSLPINPAQSGSPNHVDSAYFPGSSTSSSSDNDEGSGGATKYTIYWGFRATDHHVQGRDSQARGTAAHWHGGHVCSPNVFWRISHGPAQQLTFPTEQAAPPVCPAPASRRLSAPG</sequence>
<feature type="chain" id="PRO_0000349371" description="Putative uncharacterized protein FAM120A2P">
    <location>
        <begin position="1"/>
        <end position="196"/>
    </location>
</feature>
<feature type="region of interest" description="Disordered" evidence="1">
    <location>
        <begin position="1"/>
        <end position="118"/>
    </location>
</feature>
<feature type="region of interest" description="Disordered" evidence="1">
    <location>
        <begin position="176"/>
        <end position="196"/>
    </location>
</feature>
<feature type="compositionally biased region" description="Pro residues" evidence="1">
    <location>
        <begin position="1"/>
        <end position="10"/>
    </location>
</feature>
<feature type="compositionally biased region" description="Low complexity" evidence="1">
    <location>
        <begin position="25"/>
        <end position="45"/>
    </location>
</feature>
<feature type="compositionally biased region" description="Polar residues" evidence="1">
    <location>
        <begin position="54"/>
        <end position="69"/>
    </location>
</feature>
<feature type="sequence variant" id="VAR_061600" description="In dbSNP:rs36081907.">
    <original>R</original>
    <variation>H</variation>
    <location>
        <position position="191"/>
    </location>
</feature>
<proteinExistence type="predicted"/>
<gene>
    <name evidence="3" type="primary">FAM120A2P</name>
    <name type="synonym">C9orf129</name>
</gene>